<comment type="function">
    <text evidence="1">Catalyzes the dehydration of the S-form of NAD(P)HX at the expense of ATP, which is converted to ADP. Together with NAD(P)HX epimerase, which catalyzes the epimerization of the S- and R-forms, the enzyme allows the repair of both epimers of NAD(P)HX, a damaged form of NAD(P)H that is a result of enzymatic or heat-dependent hydration.</text>
</comment>
<comment type="catalytic activity">
    <reaction evidence="1">
        <text>(6S)-NADHX + ATP = ADP + phosphate + NADH + H(+)</text>
        <dbReference type="Rhea" id="RHEA:19017"/>
        <dbReference type="ChEBI" id="CHEBI:15378"/>
        <dbReference type="ChEBI" id="CHEBI:30616"/>
        <dbReference type="ChEBI" id="CHEBI:43474"/>
        <dbReference type="ChEBI" id="CHEBI:57945"/>
        <dbReference type="ChEBI" id="CHEBI:64074"/>
        <dbReference type="ChEBI" id="CHEBI:456216"/>
        <dbReference type="EC" id="4.2.1.93"/>
    </reaction>
</comment>
<comment type="catalytic activity">
    <reaction>
        <text>(6S)-NADPHX + ATP = ADP + phosphate + NADPH + H(+)</text>
        <dbReference type="Rhea" id="RHEA:32231"/>
        <dbReference type="ChEBI" id="CHEBI:15378"/>
        <dbReference type="ChEBI" id="CHEBI:30616"/>
        <dbReference type="ChEBI" id="CHEBI:43474"/>
        <dbReference type="ChEBI" id="CHEBI:57783"/>
        <dbReference type="ChEBI" id="CHEBI:64076"/>
        <dbReference type="ChEBI" id="CHEBI:456216"/>
        <dbReference type="EC" id="4.2.1.93"/>
    </reaction>
</comment>
<comment type="cofactor">
    <cofactor evidence="1">
        <name>Mg(2+)</name>
        <dbReference type="ChEBI" id="CHEBI:18420"/>
    </cofactor>
</comment>
<comment type="similarity">
    <text evidence="1">Belongs to the NnrD/CARKD family.</text>
</comment>
<evidence type="ECO:0000255" key="1">
    <source>
        <dbReference type="HAMAP-Rule" id="MF_03157"/>
    </source>
</evidence>
<proteinExistence type="inferred from homology"/>
<protein>
    <recommendedName>
        <fullName evidence="1">ATP-dependent (S)-NAD(P)H-hydrate dehydratase</fullName>
        <ecNumber evidence="1">4.2.1.93</ecNumber>
    </recommendedName>
    <alternativeName>
        <fullName evidence="1">ATP-dependent NAD(P)HX dehydratase</fullName>
    </alternativeName>
</protein>
<name>NNRD_DROPS</name>
<dbReference type="EC" id="4.2.1.93" evidence="1"/>
<dbReference type="EMBL" id="CH379058">
    <property type="protein sequence ID" value="EDY69687.1"/>
    <property type="molecule type" value="Genomic_DNA"/>
</dbReference>
<dbReference type="SMR" id="B5DHB2"/>
<dbReference type="FunCoup" id="B5DHB2">
    <property type="interactions" value="272"/>
</dbReference>
<dbReference type="STRING" id="46245.B5DHB2"/>
<dbReference type="eggNOG" id="KOG3974">
    <property type="taxonomic scope" value="Eukaryota"/>
</dbReference>
<dbReference type="HOGENOM" id="CLU_030651_3_0_1"/>
<dbReference type="InParanoid" id="B5DHB2"/>
<dbReference type="OMA" id="WRAAYHN"/>
<dbReference type="Proteomes" id="UP000001819">
    <property type="component" value="Unplaced"/>
</dbReference>
<dbReference type="GO" id="GO:0005524">
    <property type="term" value="F:ATP binding"/>
    <property type="evidence" value="ECO:0007669"/>
    <property type="project" value="UniProtKB-KW"/>
</dbReference>
<dbReference type="GO" id="GO:0047453">
    <property type="term" value="F:ATP-dependent NAD(P)H-hydrate dehydratase activity"/>
    <property type="evidence" value="ECO:0007669"/>
    <property type="project" value="UniProtKB-UniRule"/>
</dbReference>
<dbReference type="GO" id="GO:0110051">
    <property type="term" value="P:metabolite repair"/>
    <property type="evidence" value="ECO:0007669"/>
    <property type="project" value="TreeGrafter"/>
</dbReference>
<dbReference type="GO" id="GO:0046496">
    <property type="term" value="P:nicotinamide nucleotide metabolic process"/>
    <property type="evidence" value="ECO:0007669"/>
    <property type="project" value="UniProtKB-UniRule"/>
</dbReference>
<dbReference type="CDD" id="cd01171">
    <property type="entry name" value="YXKO-related"/>
    <property type="match status" value="1"/>
</dbReference>
<dbReference type="FunFam" id="3.40.1190.20:FF:000023">
    <property type="entry name" value="ATP-dependent (S)-NAD(P)H-hydrate dehydratase"/>
    <property type="match status" value="1"/>
</dbReference>
<dbReference type="Gene3D" id="3.40.1190.20">
    <property type="match status" value="1"/>
</dbReference>
<dbReference type="HAMAP" id="MF_01965">
    <property type="entry name" value="NADHX_dehydratase"/>
    <property type="match status" value="1"/>
</dbReference>
<dbReference type="InterPro" id="IPR017953">
    <property type="entry name" value="Carbohydrate_kinase_pred_CS"/>
</dbReference>
<dbReference type="InterPro" id="IPR000631">
    <property type="entry name" value="CARKD"/>
</dbReference>
<dbReference type="InterPro" id="IPR029056">
    <property type="entry name" value="Ribokinase-like"/>
</dbReference>
<dbReference type="NCBIfam" id="TIGR00196">
    <property type="entry name" value="yjeF_cterm"/>
    <property type="match status" value="1"/>
</dbReference>
<dbReference type="PANTHER" id="PTHR12592:SF0">
    <property type="entry name" value="ATP-DEPENDENT (S)-NAD(P)H-HYDRATE DEHYDRATASE"/>
    <property type="match status" value="1"/>
</dbReference>
<dbReference type="PANTHER" id="PTHR12592">
    <property type="entry name" value="ATP-DEPENDENT (S)-NAD(P)H-HYDRATE DEHYDRATASE FAMILY MEMBER"/>
    <property type="match status" value="1"/>
</dbReference>
<dbReference type="Pfam" id="PF01256">
    <property type="entry name" value="Carb_kinase"/>
    <property type="match status" value="1"/>
</dbReference>
<dbReference type="SUPFAM" id="SSF53613">
    <property type="entry name" value="Ribokinase-like"/>
    <property type="match status" value="1"/>
</dbReference>
<dbReference type="PROSITE" id="PS01049">
    <property type="entry name" value="YJEF_C_1"/>
    <property type="match status" value="1"/>
</dbReference>
<dbReference type="PROSITE" id="PS51383">
    <property type="entry name" value="YJEF_C_3"/>
    <property type="match status" value="1"/>
</dbReference>
<keyword id="KW-0067">ATP-binding</keyword>
<keyword id="KW-0456">Lyase</keyword>
<keyword id="KW-0520">NAD</keyword>
<keyword id="KW-0521">NADP</keyword>
<keyword id="KW-0547">Nucleotide-binding</keyword>
<keyword id="KW-0597">Phosphoprotein</keyword>
<keyword id="KW-1185">Reference proteome</keyword>
<organism>
    <name type="scientific">Drosophila pseudoobscura pseudoobscura</name>
    <name type="common">Fruit fly</name>
    <dbReference type="NCBI Taxonomy" id="46245"/>
    <lineage>
        <taxon>Eukaryota</taxon>
        <taxon>Metazoa</taxon>
        <taxon>Ecdysozoa</taxon>
        <taxon>Arthropoda</taxon>
        <taxon>Hexapoda</taxon>
        <taxon>Insecta</taxon>
        <taxon>Pterygota</taxon>
        <taxon>Neoptera</taxon>
        <taxon>Endopterygota</taxon>
        <taxon>Diptera</taxon>
        <taxon>Brachycera</taxon>
        <taxon>Muscomorpha</taxon>
        <taxon>Ephydroidea</taxon>
        <taxon>Drosophilidae</taxon>
        <taxon>Drosophila</taxon>
        <taxon>Sophophora</taxon>
    </lineage>
</organism>
<sequence>MSAIKEIPVNLPKLLTLFKTIVPKLTNDKYKGQYGRIGVIGGSLEYTGAPFFAAISSMKVGADLSHVFCQANAAPVIKSYSPDLIVHPVLDCLDAVDKIQPWLERLHVIVIGPGLGREPLILQTVTNVLKLCTKLQKPIVIDADGLFILNDNIDLVSGQRNIILTPNAMEFRRLFGEDVNDVRQKMSCLGDGVVVLEKGVNDKIHIPHTNEVYSMPTGGSGRRCGGQGDLLSGSLATFFYWSLQSNQPNPAYIAACASSYLVKRANSTAFKKFGRSLLASDMINEISAVFRSDFEDAETG</sequence>
<reference key="1">
    <citation type="journal article" date="2005" name="Genome Res.">
        <title>Comparative genome sequencing of Drosophila pseudoobscura: chromosomal, gene, and cis-element evolution.</title>
        <authorList>
            <person name="Richards S."/>
            <person name="Liu Y."/>
            <person name="Bettencourt B.R."/>
            <person name="Hradecky P."/>
            <person name="Letovsky S."/>
            <person name="Nielsen R."/>
            <person name="Thornton K."/>
            <person name="Hubisz M.J."/>
            <person name="Chen R."/>
            <person name="Meisel R.P."/>
            <person name="Couronne O."/>
            <person name="Hua S."/>
            <person name="Smith M.A."/>
            <person name="Zhang P."/>
            <person name="Liu J."/>
            <person name="Bussemaker H.J."/>
            <person name="van Batenburg M.F."/>
            <person name="Howells S.L."/>
            <person name="Scherer S.E."/>
            <person name="Sodergren E."/>
            <person name="Matthews B.B."/>
            <person name="Crosby M.A."/>
            <person name="Schroeder A.J."/>
            <person name="Ortiz-Barrientos D."/>
            <person name="Rives C.M."/>
            <person name="Metzker M.L."/>
            <person name="Muzny D.M."/>
            <person name="Scott G."/>
            <person name="Steffen D."/>
            <person name="Wheeler D.A."/>
            <person name="Worley K.C."/>
            <person name="Havlak P."/>
            <person name="Durbin K.J."/>
            <person name="Egan A."/>
            <person name="Gill R."/>
            <person name="Hume J."/>
            <person name="Morgan M.B."/>
            <person name="Miner G."/>
            <person name="Hamilton C."/>
            <person name="Huang Y."/>
            <person name="Waldron L."/>
            <person name="Verduzco D."/>
            <person name="Clerc-Blankenburg K.P."/>
            <person name="Dubchak I."/>
            <person name="Noor M.A.F."/>
            <person name="Anderson W."/>
            <person name="White K.P."/>
            <person name="Clark A.G."/>
            <person name="Schaeffer S.W."/>
            <person name="Gelbart W.M."/>
            <person name="Weinstock G.M."/>
            <person name="Gibbs R.A."/>
        </authorList>
    </citation>
    <scope>NUCLEOTIDE SEQUENCE [LARGE SCALE GENOMIC DNA]</scope>
    <source>
        <strain>MV2-25 / Tucson 14011-0121.94</strain>
    </source>
</reference>
<feature type="chain" id="PRO_0000416166" description="ATP-dependent (S)-NAD(P)H-hydrate dehydratase">
    <location>
        <begin position="1"/>
        <end position="300"/>
    </location>
</feature>
<feature type="domain" description="YjeF C-terminal" evidence="1">
    <location>
        <begin position="14"/>
        <end position="293"/>
    </location>
</feature>
<feature type="binding site" evidence="1">
    <location>
        <position position="114"/>
    </location>
    <ligand>
        <name>(6S)-NADPHX</name>
        <dbReference type="ChEBI" id="CHEBI:64076"/>
    </ligand>
</feature>
<feature type="binding site" evidence="1">
    <location>
        <begin position="167"/>
        <end position="173"/>
    </location>
    <ligand>
        <name>(6S)-NADPHX</name>
        <dbReference type="ChEBI" id="CHEBI:64076"/>
    </ligand>
</feature>
<feature type="binding site" evidence="1">
    <location>
        <begin position="198"/>
        <end position="202"/>
    </location>
    <ligand>
        <name>ATP</name>
        <dbReference type="ChEBI" id="CHEBI:30616"/>
    </ligand>
</feature>
<feature type="binding site" evidence="1">
    <location>
        <begin position="219"/>
        <end position="228"/>
    </location>
    <ligand>
        <name>ATP</name>
        <dbReference type="ChEBI" id="CHEBI:30616"/>
    </ligand>
</feature>
<feature type="binding site" evidence="1">
    <location>
        <position position="229"/>
    </location>
    <ligand>
        <name>(6S)-NADPHX</name>
        <dbReference type="ChEBI" id="CHEBI:64076"/>
    </ligand>
</feature>
<gene>
    <name type="ORF">GA25285</name>
</gene>
<accession>B5DHB2</accession>